<name>LGT_PSEA6</name>
<protein>
    <recommendedName>
        <fullName evidence="1">Phosphatidylglycerol--prolipoprotein diacylglyceryl transferase</fullName>
        <ecNumber evidence="1">2.5.1.145</ecNumber>
    </recommendedName>
</protein>
<sequence length="280" mass="31159">MVSSYFTFPQIDPIIFSIGPLSLRWYGLMYLVGFAAAFWLAGVRLSRTNWTKEQLSDLLFWGFLGVILGGRIGYVLFYQFELFLSDPLYLFKIWTGGMSFHGGLLGVIAALWWFSRKAKCTFLQVGDFIAPLVPIGLGAGRIGNFINAELWGRTTDVSWGVIFPGAGPLPRHPSQLYEFALEGVVLFLILWLYSRKPRPIGAVSGLFLLGYGSFRFFVEFFREPDQHIGLYEGAFSLGISQGQILSAPMIIGGIALMVWAVRRNKMAETGVPKSSKAAKA</sequence>
<proteinExistence type="inferred from homology"/>
<feature type="chain" id="PRO_1000053474" description="Phosphatidylglycerol--prolipoprotein diacylglyceryl transferase">
    <location>
        <begin position="1"/>
        <end position="280"/>
    </location>
</feature>
<feature type="transmembrane region" description="Helical" evidence="1">
    <location>
        <begin position="23"/>
        <end position="43"/>
    </location>
</feature>
<feature type="transmembrane region" description="Helical" evidence="1">
    <location>
        <begin position="58"/>
        <end position="78"/>
    </location>
</feature>
<feature type="transmembrane region" description="Helical" evidence="1">
    <location>
        <begin position="93"/>
        <end position="113"/>
    </location>
</feature>
<feature type="transmembrane region" description="Helical" evidence="1">
    <location>
        <begin position="120"/>
        <end position="140"/>
    </location>
</feature>
<feature type="transmembrane region" description="Helical" evidence="1">
    <location>
        <begin position="173"/>
        <end position="193"/>
    </location>
</feature>
<feature type="transmembrane region" description="Helical" evidence="1">
    <location>
        <begin position="200"/>
        <end position="220"/>
    </location>
</feature>
<feature type="transmembrane region" description="Helical" evidence="1">
    <location>
        <begin position="241"/>
        <end position="261"/>
    </location>
</feature>
<feature type="binding site" evidence="1">
    <location>
        <position position="141"/>
    </location>
    <ligand>
        <name>a 1,2-diacyl-sn-glycero-3-phospho-(1'-sn-glycerol)</name>
        <dbReference type="ChEBI" id="CHEBI:64716"/>
    </ligand>
</feature>
<comment type="function">
    <text evidence="1">Catalyzes the transfer of the diacylglyceryl group from phosphatidylglycerol to the sulfhydryl group of the N-terminal cysteine of a prolipoprotein, the first step in the formation of mature lipoproteins.</text>
</comment>
<comment type="catalytic activity">
    <reaction evidence="1">
        <text>L-cysteinyl-[prolipoprotein] + a 1,2-diacyl-sn-glycero-3-phospho-(1'-sn-glycerol) = an S-1,2-diacyl-sn-glyceryl-L-cysteinyl-[prolipoprotein] + sn-glycerol 1-phosphate + H(+)</text>
        <dbReference type="Rhea" id="RHEA:56712"/>
        <dbReference type="Rhea" id="RHEA-COMP:14679"/>
        <dbReference type="Rhea" id="RHEA-COMP:14680"/>
        <dbReference type="ChEBI" id="CHEBI:15378"/>
        <dbReference type="ChEBI" id="CHEBI:29950"/>
        <dbReference type="ChEBI" id="CHEBI:57685"/>
        <dbReference type="ChEBI" id="CHEBI:64716"/>
        <dbReference type="ChEBI" id="CHEBI:140658"/>
        <dbReference type="EC" id="2.5.1.145"/>
    </reaction>
</comment>
<comment type="pathway">
    <text evidence="1">Protein modification; lipoprotein biosynthesis (diacylglyceryl transfer).</text>
</comment>
<comment type="subcellular location">
    <subcellularLocation>
        <location evidence="1">Cell inner membrane</location>
        <topology evidence="1">Multi-pass membrane protein</topology>
    </subcellularLocation>
</comment>
<comment type="similarity">
    <text evidence="1">Belongs to the Lgt family.</text>
</comment>
<organism>
    <name type="scientific">Pseudoalteromonas atlantica (strain T6c / ATCC BAA-1087)</name>
    <dbReference type="NCBI Taxonomy" id="3042615"/>
    <lineage>
        <taxon>Bacteria</taxon>
        <taxon>Pseudomonadati</taxon>
        <taxon>Pseudomonadota</taxon>
        <taxon>Gammaproteobacteria</taxon>
        <taxon>Alteromonadales</taxon>
        <taxon>Alteromonadaceae</taxon>
        <taxon>Paraglaciecola</taxon>
    </lineage>
</organism>
<evidence type="ECO:0000255" key="1">
    <source>
        <dbReference type="HAMAP-Rule" id="MF_01147"/>
    </source>
</evidence>
<keyword id="KW-0997">Cell inner membrane</keyword>
<keyword id="KW-1003">Cell membrane</keyword>
<keyword id="KW-0472">Membrane</keyword>
<keyword id="KW-0808">Transferase</keyword>
<keyword id="KW-0812">Transmembrane</keyword>
<keyword id="KW-1133">Transmembrane helix</keyword>
<accession>Q15P45</accession>
<gene>
    <name evidence="1" type="primary">lgt</name>
    <name type="ordered locus">Patl_3843</name>
</gene>
<reference key="1">
    <citation type="submission" date="2006-06" db="EMBL/GenBank/DDBJ databases">
        <title>Complete sequence of Pseudoalteromonas atlantica T6c.</title>
        <authorList>
            <consortium name="US DOE Joint Genome Institute"/>
            <person name="Copeland A."/>
            <person name="Lucas S."/>
            <person name="Lapidus A."/>
            <person name="Barry K."/>
            <person name="Detter J.C."/>
            <person name="Glavina del Rio T."/>
            <person name="Hammon N."/>
            <person name="Israni S."/>
            <person name="Dalin E."/>
            <person name="Tice H."/>
            <person name="Pitluck S."/>
            <person name="Saunders E."/>
            <person name="Brettin T."/>
            <person name="Bruce D."/>
            <person name="Han C."/>
            <person name="Tapia R."/>
            <person name="Gilna P."/>
            <person name="Schmutz J."/>
            <person name="Larimer F."/>
            <person name="Land M."/>
            <person name="Hauser L."/>
            <person name="Kyrpides N."/>
            <person name="Kim E."/>
            <person name="Karls A.C."/>
            <person name="Bartlett D."/>
            <person name="Higgins B.P."/>
            <person name="Richardson P."/>
        </authorList>
    </citation>
    <scope>NUCLEOTIDE SEQUENCE [LARGE SCALE GENOMIC DNA]</scope>
    <source>
        <strain>T6c / ATCC BAA-1087</strain>
    </source>
</reference>
<dbReference type="EC" id="2.5.1.145" evidence="1"/>
<dbReference type="EMBL" id="CP000388">
    <property type="protein sequence ID" value="ABG42343.1"/>
    <property type="molecule type" value="Genomic_DNA"/>
</dbReference>
<dbReference type="RefSeq" id="WP_011576552.1">
    <property type="nucleotide sequence ID" value="NC_008228.1"/>
</dbReference>
<dbReference type="SMR" id="Q15P45"/>
<dbReference type="STRING" id="342610.Patl_3843"/>
<dbReference type="KEGG" id="pat:Patl_3843"/>
<dbReference type="eggNOG" id="COG0682">
    <property type="taxonomic scope" value="Bacteria"/>
</dbReference>
<dbReference type="HOGENOM" id="CLU_013386_1_0_6"/>
<dbReference type="OrthoDB" id="871140at2"/>
<dbReference type="UniPathway" id="UPA00664"/>
<dbReference type="Proteomes" id="UP000001981">
    <property type="component" value="Chromosome"/>
</dbReference>
<dbReference type="GO" id="GO:0005886">
    <property type="term" value="C:plasma membrane"/>
    <property type="evidence" value="ECO:0007669"/>
    <property type="project" value="UniProtKB-SubCell"/>
</dbReference>
<dbReference type="GO" id="GO:0008961">
    <property type="term" value="F:phosphatidylglycerol-prolipoprotein diacylglyceryl transferase activity"/>
    <property type="evidence" value="ECO:0007669"/>
    <property type="project" value="UniProtKB-UniRule"/>
</dbReference>
<dbReference type="GO" id="GO:0042158">
    <property type="term" value="P:lipoprotein biosynthetic process"/>
    <property type="evidence" value="ECO:0007669"/>
    <property type="project" value="UniProtKB-UniRule"/>
</dbReference>
<dbReference type="HAMAP" id="MF_01147">
    <property type="entry name" value="Lgt"/>
    <property type="match status" value="1"/>
</dbReference>
<dbReference type="InterPro" id="IPR001640">
    <property type="entry name" value="Lgt"/>
</dbReference>
<dbReference type="NCBIfam" id="TIGR00544">
    <property type="entry name" value="lgt"/>
    <property type="match status" value="1"/>
</dbReference>
<dbReference type="PANTHER" id="PTHR30589:SF0">
    <property type="entry name" value="PHOSPHATIDYLGLYCEROL--PROLIPOPROTEIN DIACYLGLYCERYL TRANSFERASE"/>
    <property type="match status" value="1"/>
</dbReference>
<dbReference type="PANTHER" id="PTHR30589">
    <property type="entry name" value="PROLIPOPROTEIN DIACYLGLYCERYL TRANSFERASE"/>
    <property type="match status" value="1"/>
</dbReference>
<dbReference type="Pfam" id="PF01790">
    <property type="entry name" value="LGT"/>
    <property type="match status" value="1"/>
</dbReference>
<dbReference type="PROSITE" id="PS01311">
    <property type="entry name" value="LGT"/>
    <property type="match status" value="1"/>
</dbReference>